<name>CSRA_PROMI</name>
<gene>
    <name evidence="1" type="primary">csrA</name>
    <name evidence="3" type="synonym">rsmA</name>
</gene>
<feature type="chain" id="PRO_0000177079" description="Translational regulator CsrA">
    <location>
        <begin position="1"/>
        <end position="62"/>
    </location>
</feature>
<reference key="1">
    <citation type="journal article" date="2003" name="J. Med. Microbiol.">
        <title>Role of RsmA in the regulation of swarming motility and virulence factor expression in Proteus mirabilis.</title>
        <authorList>
            <person name="Liaw S.J."/>
            <person name="Lai H.C."/>
            <person name="Ho S.W."/>
            <person name="Luh K.T."/>
            <person name="Wang W.B."/>
        </authorList>
    </citation>
    <scope>NUCLEOTIDE SEQUENCE [GENOMIC DNA]</scope>
    <scope>FUNCTION</scope>
    <source>
        <strain>P19</strain>
    </source>
</reference>
<comment type="function">
    <text evidence="1">A key translational regulator that binds mRNA to regulate translation initiation and/or mRNA stability. Mediates global changes in gene expression, shifting from rapid growth to stress survival by linking envelope stress, the stringent response and the catabolite repression systems. Usually binds in the 5'-UTR; binding at or near the Shine-Dalgarno sequence prevents ribosome-binding, repressing translation, binding elsewhere in the 5'-UTR can activate translation and/or stabilize the mRNA. Its function is antagonized by small RNA(s).</text>
</comment>
<comment type="function">
    <text evidence="2">Expression from a low-copy number plasmid has no effect on swimming, but blocks swarming and virulence factor expression as measured by cell lengthening and hemolysin, protease, urease and flagellin production (PubMed:12488561). Expression destabilizes hemolysin mRNA (PubMed:12488561). Complements an E.coli disruption mutant (PubMed:12488561).</text>
</comment>
<comment type="subunit">
    <text evidence="1">Homodimer; the beta-strands of each monomer intercalate to form a hydrophobic core, while the alpha-helices form wings that extend away from the core.</text>
</comment>
<comment type="subcellular location">
    <subcellularLocation>
        <location evidence="1">Cytoplasm</location>
    </subcellularLocation>
</comment>
<comment type="similarity">
    <text evidence="1">Belongs to the CsrA/RsmA family.</text>
</comment>
<protein>
    <recommendedName>
        <fullName evidence="1">Translational regulator CsrA</fullName>
    </recommendedName>
    <alternativeName>
        <fullName evidence="1">Carbon storage regulator</fullName>
    </alternativeName>
</protein>
<sequence length="62" mass="6981">MLILTRRVGETLMIGDDVTVTVLGVKGNQVRIGVNAPKEVSVHREEIYQRIQAEKTQPTDNY</sequence>
<evidence type="ECO:0000255" key="1">
    <source>
        <dbReference type="HAMAP-Rule" id="MF_00167"/>
    </source>
</evidence>
<evidence type="ECO:0000269" key="2">
    <source>
    </source>
</evidence>
<evidence type="ECO:0000303" key="3">
    <source>
    </source>
</evidence>
<organism>
    <name type="scientific">Proteus mirabilis</name>
    <dbReference type="NCBI Taxonomy" id="584"/>
    <lineage>
        <taxon>Bacteria</taxon>
        <taxon>Pseudomonadati</taxon>
        <taxon>Pseudomonadota</taxon>
        <taxon>Gammaproteobacteria</taxon>
        <taxon>Enterobacterales</taxon>
        <taxon>Morganellaceae</taxon>
        <taxon>Proteus</taxon>
    </lineage>
</organism>
<accession>Q93MI1</accession>
<keyword id="KW-0010">Activator</keyword>
<keyword id="KW-0963">Cytoplasm</keyword>
<keyword id="KW-0678">Repressor</keyword>
<keyword id="KW-0694">RNA-binding</keyword>
<keyword id="KW-0810">Translation regulation</keyword>
<proteinExistence type="inferred from homology"/>
<dbReference type="EMBL" id="AF403736">
    <property type="protein sequence ID" value="AAK94932.1"/>
    <property type="molecule type" value="Genomic_DNA"/>
</dbReference>
<dbReference type="RefSeq" id="WP_004244778.1">
    <property type="nucleotide sequence ID" value="NZ_WURR01000003.1"/>
</dbReference>
<dbReference type="SMR" id="Q93MI1"/>
<dbReference type="STRING" id="584.AOUC001_13975"/>
<dbReference type="GeneID" id="93395167"/>
<dbReference type="OMA" id="VYRKEVY"/>
<dbReference type="OrthoDB" id="9809061at2"/>
<dbReference type="GO" id="GO:0005829">
    <property type="term" value="C:cytosol"/>
    <property type="evidence" value="ECO:0007669"/>
    <property type="project" value="TreeGrafter"/>
</dbReference>
<dbReference type="GO" id="GO:0048027">
    <property type="term" value="F:mRNA 5'-UTR binding"/>
    <property type="evidence" value="ECO:0007669"/>
    <property type="project" value="UniProtKB-UniRule"/>
</dbReference>
<dbReference type="GO" id="GO:0006402">
    <property type="term" value="P:mRNA catabolic process"/>
    <property type="evidence" value="ECO:0007669"/>
    <property type="project" value="InterPro"/>
</dbReference>
<dbReference type="GO" id="GO:0045947">
    <property type="term" value="P:negative regulation of translational initiation"/>
    <property type="evidence" value="ECO:0007669"/>
    <property type="project" value="UniProtKB-UniRule"/>
</dbReference>
<dbReference type="GO" id="GO:0045948">
    <property type="term" value="P:positive regulation of translational initiation"/>
    <property type="evidence" value="ECO:0007669"/>
    <property type="project" value="UniProtKB-UniRule"/>
</dbReference>
<dbReference type="GO" id="GO:0006109">
    <property type="term" value="P:regulation of carbohydrate metabolic process"/>
    <property type="evidence" value="ECO:0007669"/>
    <property type="project" value="UniProtKB-UniRule"/>
</dbReference>
<dbReference type="FunFam" id="2.60.40.4380:FF:000001">
    <property type="entry name" value="Translational regulator CsrA"/>
    <property type="match status" value="1"/>
</dbReference>
<dbReference type="Gene3D" id="2.60.40.4380">
    <property type="entry name" value="Translational regulator CsrA"/>
    <property type="match status" value="1"/>
</dbReference>
<dbReference type="HAMAP" id="MF_00167">
    <property type="entry name" value="CsrA"/>
    <property type="match status" value="1"/>
</dbReference>
<dbReference type="InterPro" id="IPR003751">
    <property type="entry name" value="CsrA"/>
</dbReference>
<dbReference type="InterPro" id="IPR036107">
    <property type="entry name" value="CsrA_sf"/>
</dbReference>
<dbReference type="NCBIfam" id="TIGR00202">
    <property type="entry name" value="csrA"/>
    <property type="match status" value="1"/>
</dbReference>
<dbReference type="NCBIfam" id="NF002469">
    <property type="entry name" value="PRK01712.1"/>
    <property type="match status" value="1"/>
</dbReference>
<dbReference type="PANTHER" id="PTHR34984">
    <property type="entry name" value="CARBON STORAGE REGULATOR"/>
    <property type="match status" value="1"/>
</dbReference>
<dbReference type="PANTHER" id="PTHR34984:SF1">
    <property type="entry name" value="CARBON STORAGE REGULATOR"/>
    <property type="match status" value="1"/>
</dbReference>
<dbReference type="Pfam" id="PF02599">
    <property type="entry name" value="CsrA"/>
    <property type="match status" value="1"/>
</dbReference>
<dbReference type="SUPFAM" id="SSF117130">
    <property type="entry name" value="CsrA-like"/>
    <property type="match status" value="1"/>
</dbReference>